<proteinExistence type="inferred from homology"/>
<evidence type="ECO:0000255" key="1">
    <source>
        <dbReference type="HAMAP-Rule" id="MF_01458"/>
    </source>
</evidence>
<evidence type="ECO:0000256" key="2">
    <source>
        <dbReference type="SAM" id="MobiDB-lite"/>
    </source>
</evidence>
<reference key="1">
    <citation type="journal article" date="2009" name="PLoS ONE">
        <title>Complete genome sequence of the aerobic CO-oxidizing thermophile Thermomicrobium roseum.</title>
        <authorList>
            <person name="Wu D."/>
            <person name="Raymond J."/>
            <person name="Wu M."/>
            <person name="Chatterji S."/>
            <person name="Ren Q."/>
            <person name="Graham J.E."/>
            <person name="Bryant D.A."/>
            <person name="Robb F."/>
            <person name="Colman A."/>
            <person name="Tallon L.J."/>
            <person name="Badger J.H."/>
            <person name="Madupu R."/>
            <person name="Ward N.L."/>
            <person name="Eisen J.A."/>
        </authorList>
    </citation>
    <scope>NUCLEOTIDE SEQUENCE [LARGE SCALE GENOMIC DNA]</scope>
    <source>
        <strain>ATCC 27502 / DSM 5159 / P-2</strain>
    </source>
</reference>
<accession>B9KXV3</accession>
<comment type="function">
    <text evidence="1">Acts as a processive, ATP-dependent zinc metallopeptidase for both cytoplasmic and membrane proteins. Plays a role in the quality control of integral membrane proteins.</text>
</comment>
<comment type="cofactor">
    <cofactor evidence="1">
        <name>Zn(2+)</name>
        <dbReference type="ChEBI" id="CHEBI:29105"/>
    </cofactor>
    <text evidence="1">Binds 1 zinc ion per subunit.</text>
</comment>
<comment type="subunit">
    <text evidence="1">Homohexamer.</text>
</comment>
<comment type="subcellular location">
    <subcellularLocation>
        <location evidence="1">Cell membrane</location>
        <topology evidence="1">Multi-pass membrane protein</topology>
        <orientation evidence="1">Cytoplasmic side</orientation>
    </subcellularLocation>
</comment>
<comment type="similarity">
    <text evidence="1">In the central section; belongs to the AAA ATPase family.</text>
</comment>
<comment type="similarity">
    <text evidence="1">In the C-terminal section; belongs to the peptidase M41 family.</text>
</comment>
<keyword id="KW-0067">ATP-binding</keyword>
<keyword id="KW-1003">Cell membrane</keyword>
<keyword id="KW-0378">Hydrolase</keyword>
<keyword id="KW-0472">Membrane</keyword>
<keyword id="KW-0479">Metal-binding</keyword>
<keyword id="KW-0482">Metalloprotease</keyword>
<keyword id="KW-0547">Nucleotide-binding</keyword>
<keyword id="KW-0614">Plasmid</keyword>
<keyword id="KW-0645">Protease</keyword>
<keyword id="KW-1185">Reference proteome</keyword>
<keyword id="KW-0812">Transmembrane</keyword>
<keyword id="KW-1133">Transmembrane helix</keyword>
<keyword id="KW-0862">Zinc</keyword>
<dbReference type="EC" id="3.4.24.-" evidence="1"/>
<dbReference type="EMBL" id="CP001275">
    <property type="protein sequence ID" value="ACM06215.1"/>
    <property type="molecule type" value="Genomic_DNA"/>
</dbReference>
<dbReference type="RefSeq" id="WP_012641703.1">
    <property type="nucleotide sequence ID" value="NC_011959.1"/>
</dbReference>
<dbReference type="SMR" id="B9KXV3"/>
<dbReference type="STRING" id="309801.trd_0293"/>
<dbReference type="MEROPS" id="M41.009"/>
<dbReference type="KEGG" id="tro:trd_0293"/>
<dbReference type="eggNOG" id="COG0465">
    <property type="taxonomic scope" value="Bacteria"/>
</dbReference>
<dbReference type="HOGENOM" id="CLU_000688_16_2_0"/>
<dbReference type="OrthoDB" id="9809379at2"/>
<dbReference type="Proteomes" id="UP000000447">
    <property type="component" value="Chromosome"/>
</dbReference>
<dbReference type="GO" id="GO:0005886">
    <property type="term" value="C:plasma membrane"/>
    <property type="evidence" value="ECO:0007669"/>
    <property type="project" value="UniProtKB-SubCell"/>
</dbReference>
<dbReference type="GO" id="GO:0005524">
    <property type="term" value="F:ATP binding"/>
    <property type="evidence" value="ECO:0007669"/>
    <property type="project" value="UniProtKB-UniRule"/>
</dbReference>
<dbReference type="GO" id="GO:0016887">
    <property type="term" value="F:ATP hydrolysis activity"/>
    <property type="evidence" value="ECO:0007669"/>
    <property type="project" value="UniProtKB-UniRule"/>
</dbReference>
<dbReference type="GO" id="GO:0004176">
    <property type="term" value="F:ATP-dependent peptidase activity"/>
    <property type="evidence" value="ECO:0007669"/>
    <property type="project" value="InterPro"/>
</dbReference>
<dbReference type="GO" id="GO:0004222">
    <property type="term" value="F:metalloendopeptidase activity"/>
    <property type="evidence" value="ECO:0007669"/>
    <property type="project" value="InterPro"/>
</dbReference>
<dbReference type="GO" id="GO:0008270">
    <property type="term" value="F:zinc ion binding"/>
    <property type="evidence" value="ECO:0007669"/>
    <property type="project" value="UniProtKB-UniRule"/>
</dbReference>
<dbReference type="GO" id="GO:0030163">
    <property type="term" value="P:protein catabolic process"/>
    <property type="evidence" value="ECO:0007669"/>
    <property type="project" value="UniProtKB-UniRule"/>
</dbReference>
<dbReference type="GO" id="GO:0006508">
    <property type="term" value="P:proteolysis"/>
    <property type="evidence" value="ECO:0007669"/>
    <property type="project" value="UniProtKB-KW"/>
</dbReference>
<dbReference type="CDD" id="cd19501">
    <property type="entry name" value="RecA-like_FtsH"/>
    <property type="match status" value="1"/>
</dbReference>
<dbReference type="FunFam" id="1.10.8.60:FF:000001">
    <property type="entry name" value="ATP-dependent zinc metalloprotease FtsH"/>
    <property type="match status" value="1"/>
</dbReference>
<dbReference type="FunFam" id="1.20.58.760:FF:000001">
    <property type="entry name" value="ATP-dependent zinc metalloprotease FtsH"/>
    <property type="match status" value="1"/>
</dbReference>
<dbReference type="FunFam" id="3.40.50.300:FF:000001">
    <property type="entry name" value="ATP-dependent zinc metalloprotease FtsH"/>
    <property type="match status" value="1"/>
</dbReference>
<dbReference type="Gene3D" id="1.10.8.60">
    <property type="match status" value="1"/>
</dbReference>
<dbReference type="Gene3D" id="3.40.50.300">
    <property type="entry name" value="P-loop containing nucleotide triphosphate hydrolases"/>
    <property type="match status" value="1"/>
</dbReference>
<dbReference type="Gene3D" id="1.20.58.760">
    <property type="entry name" value="Peptidase M41"/>
    <property type="match status" value="1"/>
</dbReference>
<dbReference type="HAMAP" id="MF_01458">
    <property type="entry name" value="FtsH"/>
    <property type="match status" value="1"/>
</dbReference>
<dbReference type="InterPro" id="IPR003593">
    <property type="entry name" value="AAA+_ATPase"/>
</dbReference>
<dbReference type="InterPro" id="IPR041569">
    <property type="entry name" value="AAA_lid_3"/>
</dbReference>
<dbReference type="InterPro" id="IPR003959">
    <property type="entry name" value="ATPase_AAA_core"/>
</dbReference>
<dbReference type="InterPro" id="IPR003960">
    <property type="entry name" value="ATPase_AAA_CS"/>
</dbReference>
<dbReference type="InterPro" id="IPR005936">
    <property type="entry name" value="FtsH"/>
</dbReference>
<dbReference type="InterPro" id="IPR027417">
    <property type="entry name" value="P-loop_NTPase"/>
</dbReference>
<dbReference type="InterPro" id="IPR011546">
    <property type="entry name" value="Pept_M41_FtsH_extracell"/>
</dbReference>
<dbReference type="InterPro" id="IPR000642">
    <property type="entry name" value="Peptidase_M41"/>
</dbReference>
<dbReference type="InterPro" id="IPR037219">
    <property type="entry name" value="Peptidase_M41-like"/>
</dbReference>
<dbReference type="NCBIfam" id="TIGR01241">
    <property type="entry name" value="FtsH_fam"/>
    <property type="match status" value="1"/>
</dbReference>
<dbReference type="PANTHER" id="PTHR23076:SF97">
    <property type="entry name" value="ATP-DEPENDENT ZINC METALLOPROTEASE YME1L1"/>
    <property type="match status" value="1"/>
</dbReference>
<dbReference type="PANTHER" id="PTHR23076">
    <property type="entry name" value="METALLOPROTEASE M41 FTSH"/>
    <property type="match status" value="1"/>
</dbReference>
<dbReference type="Pfam" id="PF00004">
    <property type="entry name" value="AAA"/>
    <property type="match status" value="1"/>
</dbReference>
<dbReference type="Pfam" id="PF17862">
    <property type="entry name" value="AAA_lid_3"/>
    <property type="match status" value="1"/>
</dbReference>
<dbReference type="Pfam" id="PF06480">
    <property type="entry name" value="FtsH_ext"/>
    <property type="match status" value="1"/>
</dbReference>
<dbReference type="Pfam" id="PF01434">
    <property type="entry name" value="Peptidase_M41"/>
    <property type="match status" value="1"/>
</dbReference>
<dbReference type="SMART" id="SM00382">
    <property type="entry name" value="AAA"/>
    <property type="match status" value="1"/>
</dbReference>
<dbReference type="SUPFAM" id="SSF140990">
    <property type="entry name" value="FtsH protease domain-like"/>
    <property type="match status" value="1"/>
</dbReference>
<dbReference type="SUPFAM" id="SSF52540">
    <property type="entry name" value="P-loop containing nucleoside triphosphate hydrolases"/>
    <property type="match status" value="1"/>
</dbReference>
<dbReference type="PROSITE" id="PS00674">
    <property type="entry name" value="AAA"/>
    <property type="match status" value="1"/>
</dbReference>
<sequence length="652" mass="72162">MSDNKWLRNGFVWMILIIAAIAVWVTFVQGGRGGATITTQEMAADIKAGKVERLVMTSGSDEIQVQYIGTNEVRTLRLPPNVDIFELLKTFGIDPQQVDIQTHRASQWGNVLGTLTFLLPTLFLIGVIIFMMRQAQGTNNQALSFGKSRARVFTSNRPTVTFDDVAGVDEAKEELQEIVEFLKYPEKFAALGARIPRGVLLVGPPGTGKTLLSRAVAGEAGVPFFSISGSEFVEMFVGVGASRVRDLFDQAKRNAPCIVFIDEIDAVGRQRGAGLGGSHDEREQTLNQILVEMDGFDSSTNVIVIAATNRPDVLDPALLRPGRFDRQVVLDRPDLHGRLAILKVHTRGKPLESDVDLEDLARQTPGFSGADLENLVNEAAILAARRNKKTIGRRELYEAIDRVVAGPERKSRRISEREKLMTAYHEAGHALVARMLPHADPVHKVSIVARGMMGGYTRVLPEEDRFFWTKKQFEAQLAVFMAGLVAEELVFQEVSTGAANDIERATTLARRMVTEFGMSERLGPLAFGRKEELVFLGREIAEQRNYSDQVAYEIDQEVRRLIDQAYQTAKQILLDHMDKLEKIATLLVEKETLDGHEIEALFDEPRPRPELVGPPLTRPAALIATPETARPDSPSEARPAAPVPHIKPQPAS</sequence>
<feature type="chain" id="PRO_0000400410" description="ATP-dependent zinc metalloprotease FtsH 1">
    <location>
        <begin position="1"/>
        <end position="652"/>
    </location>
</feature>
<feature type="topological domain" description="Cytoplasmic" evidence="1">
    <location>
        <begin position="1"/>
        <end position="9"/>
    </location>
</feature>
<feature type="transmembrane region" description="Helical" evidence="1">
    <location>
        <begin position="10"/>
        <end position="30"/>
    </location>
</feature>
<feature type="topological domain" description="Extracellular" evidence="1">
    <location>
        <begin position="31"/>
        <end position="110"/>
    </location>
</feature>
<feature type="transmembrane region" description="Helical" evidence="1">
    <location>
        <begin position="111"/>
        <end position="131"/>
    </location>
</feature>
<feature type="topological domain" description="Cytoplasmic" evidence="1">
    <location>
        <begin position="132"/>
        <end position="652"/>
    </location>
</feature>
<feature type="region of interest" description="Disordered" evidence="2">
    <location>
        <begin position="623"/>
        <end position="652"/>
    </location>
</feature>
<feature type="compositionally biased region" description="Pro residues" evidence="2">
    <location>
        <begin position="641"/>
        <end position="652"/>
    </location>
</feature>
<feature type="active site" evidence="1">
    <location>
        <position position="426"/>
    </location>
</feature>
<feature type="binding site" evidence="1">
    <location>
        <begin position="203"/>
        <end position="210"/>
    </location>
    <ligand>
        <name>ATP</name>
        <dbReference type="ChEBI" id="CHEBI:30616"/>
    </ligand>
</feature>
<feature type="binding site" evidence="1">
    <location>
        <position position="425"/>
    </location>
    <ligand>
        <name>Zn(2+)</name>
        <dbReference type="ChEBI" id="CHEBI:29105"/>
        <note>catalytic</note>
    </ligand>
</feature>
<feature type="binding site" evidence="1">
    <location>
        <position position="429"/>
    </location>
    <ligand>
        <name>Zn(2+)</name>
        <dbReference type="ChEBI" id="CHEBI:29105"/>
        <note>catalytic</note>
    </ligand>
</feature>
<feature type="binding site" evidence="1">
    <location>
        <position position="501"/>
    </location>
    <ligand>
        <name>Zn(2+)</name>
        <dbReference type="ChEBI" id="CHEBI:29105"/>
        <note>catalytic</note>
    </ligand>
</feature>
<organism>
    <name type="scientific">Thermomicrobium roseum (strain ATCC 27502 / DSM 5159 / P-2)</name>
    <dbReference type="NCBI Taxonomy" id="309801"/>
    <lineage>
        <taxon>Bacteria</taxon>
        <taxon>Pseudomonadati</taxon>
        <taxon>Thermomicrobiota</taxon>
        <taxon>Thermomicrobia</taxon>
        <taxon>Thermomicrobiales</taxon>
        <taxon>Thermomicrobiaceae</taxon>
        <taxon>Thermomicrobium</taxon>
    </lineage>
</organism>
<protein>
    <recommendedName>
        <fullName evidence="1">ATP-dependent zinc metalloprotease FtsH 1</fullName>
        <ecNumber evidence="1">3.4.24.-</ecNumber>
    </recommendedName>
</protein>
<name>FTSH1_THERP</name>
<gene>
    <name evidence="1" type="primary">ftsH1</name>
    <name type="ordered locus">trd_0293</name>
</gene>